<feature type="chain" id="PRO_1000199169" description="Leucine--tRNA ligase">
    <location>
        <begin position="1"/>
        <end position="874"/>
    </location>
</feature>
<feature type="short sequence motif" description="'HIGH' region">
    <location>
        <begin position="47"/>
        <end position="57"/>
    </location>
</feature>
<feature type="short sequence motif" description="'KMSKS' region">
    <location>
        <begin position="636"/>
        <end position="640"/>
    </location>
</feature>
<feature type="binding site" evidence="1">
    <location>
        <position position="639"/>
    </location>
    <ligand>
        <name>ATP</name>
        <dbReference type="ChEBI" id="CHEBI:30616"/>
    </ligand>
</feature>
<accession>B7I5I5</accession>
<gene>
    <name evidence="1" type="primary">leuS</name>
    <name type="ordered locus">AB57_0622</name>
</gene>
<evidence type="ECO:0000255" key="1">
    <source>
        <dbReference type="HAMAP-Rule" id="MF_00049"/>
    </source>
</evidence>
<protein>
    <recommendedName>
        <fullName evidence="1">Leucine--tRNA ligase</fullName>
        <ecNumber evidence="1">6.1.1.4</ecNumber>
    </recommendedName>
    <alternativeName>
        <fullName evidence="1">Leucyl-tRNA synthetase</fullName>
        <shortName evidence="1">LeuRS</shortName>
    </alternativeName>
</protein>
<proteinExistence type="inferred from homology"/>
<comment type="catalytic activity">
    <reaction evidence="1">
        <text>tRNA(Leu) + L-leucine + ATP = L-leucyl-tRNA(Leu) + AMP + diphosphate</text>
        <dbReference type="Rhea" id="RHEA:11688"/>
        <dbReference type="Rhea" id="RHEA-COMP:9613"/>
        <dbReference type="Rhea" id="RHEA-COMP:9622"/>
        <dbReference type="ChEBI" id="CHEBI:30616"/>
        <dbReference type="ChEBI" id="CHEBI:33019"/>
        <dbReference type="ChEBI" id="CHEBI:57427"/>
        <dbReference type="ChEBI" id="CHEBI:78442"/>
        <dbReference type="ChEBI" id="CHEBI:78494"/>
        <dbReference type="ChEBI" id="CHEBI:456215"/>
        <dbReference type="EC" id="6.1.1.4"/>
    </reaction>
</comment>
<comment type="subcellular location">
    <subcellularLocation>
        <location evidence="1">Cytoplasm</location>
    </subcellularLocation>
</comment>
<comment type="similarity">
    <text evidence="1">Belongs to the class-I aminoacyl-tRNA synthetase family.</text>
</comment>
<dbReference type="EC" id="6.1.1.4" evidence="1"/>
<dbReference type="EMBL" id="CP001182">
    <property type="protein sequence ID" value="ACJ40043.1"/>
    <property type="molecule type" value="Genomic_DNA"/>
</dbReference>
<dbReference type="RefSeq" id="WP_000155773.1">
    <property type="nucleotide sequence ID" value="NC_011586.2"/>
</dbReference>
<dbReference type="SMR" id="B7I5I5"/>
<dbReference type="GeneID" id="92892523"/>
<dbReference type="KEGG" id="abn:AB57_0622"/>
<dbReference type="HOGENOM" id="CLU_004427_0_0_6"/>
<dbReference type="Proteomes" id="UP000007094">
    <property type="component" value="Chromosome"/>
</dbReference>
<dbReference type="GO" id="GO:0005829">
    <property type="term" value="C:cytosol"/>
    <property type="evidence" value="ECO:0007669"/>
    <property type="project" value="TreeGrafter"/>
</dbReference>
<dbReference type="GO" id="GO:0002161">
    <property type="term" value="F:aminoacyl-tRNA deacylase activity"/>
    <property type="evidence" value="ECO:0007669"/>
    <property type="project" value="InterPro"/>
</dbReference>
<dbReference type="GO" id="GO:0005524">
    <property type="term" value="F:ATP binding"/>
    <property type="evidence" value="ECO:0007669"/>
    <property type="project" value="UniProtKB-UniRule"/>
</dbReference>
<dbReference type="GO" id="GO:0004823">
    <property type="term" value="F:leucine-tRNA ligase activity"/>
    <property type="evidence" value="ECO:0007669"/>
    <property type="project" value="UniProtKB-UniRule"/>
</dbReference>
<dbReference type="GO" id="GO:0006429">
    <property type="term" value="P:leucyl-tRNA aminoacylation"/>
    <property type="evidence" value="ECO:0007669"/>
    <property type="project" value="UniProtKB-UniRule"/>
</dbReference>
<dbReference type="CDD" id="cd07958">
    <property type="entry name" value="Anticodon_Ia_Leu_BEm"/>
    <property type="match status" value="1"/>
</dbReference>
<dbReference type="CDD" id="cd00812">
    <property type="entry name" value="LeuRS_core"/>
    <property type="match status" value="1"/>
</dbReference>
<dbReference type="FunFam" id="1.10.730.10:FF:000003">
    <property type="entry name" value="Leucine--tRNA ligase"/>
    <property type="match status" value="1"/>
</dbReference>
<dbReference type="FunFam" id="2.20.28.290:FF:000001">
    <property type="entry name" value="Leucine--tRNA ligase"/>
    <property type="match status" value="1"/>
</dbReference>
<dbReference type="FunFam" id="3.40.50.620:FF:000003">
    <property type="entry name" value="Leucine--tRNA ligase"/>
    <property type="match status" value="1"/>
</dbReference>
<dbReference type="FunFam" id="3.40.50.620:FF:000124">
    <property type="entry name" value="Leucine--tRNA ligase"/>
    <property type="match status" value="1"/>
</dbReference>
<dbReference type="FunFam" id="3.90.740.10:FF:000012">
    <property type="entry name" value="Leucine--tRNA ligase"/>
    <property type="match status" value="1"/>
</dbReference>
<dbReference type="Gene3D" id="2.20.28.290">
    <property type="match status" value="1"/>
</dbReference>
<dbReference type="Gene3D" id="3.10.20.590">
    <property type="match status" value="1"/>
</dbReference>
<dbReference type="Gene3D" id="3.40.50.620">
    <property type="entry name" value="HUPs"/>
    <property type="match status" value="2"/>
</dbReference>
<dbReference type="Gene3D" id="1.10.730.10">
    <property type="entry name" value="Isoleucyl-tRNA Synthetase, Domain 1"/>
    <property type="match status" value="1"/>
</dbReference>
<dbReference type="Gene3D" id="3.90.740.10">
    <property type="entry name" value="Valyl/Leucyl/Isoleucyl-tRNA synthetase, editing domain"/>
    <property type="match status" value="1"/>
</dbReference>
<dbReference type="HAMAP" id="MF_00049_B">
    <property type="entry name" value="Leu_tRNA_synth_B"/>
    <property type="match status" value="1"/>
</dbReference>
<dbReference type="InterPro" id="IPR001412">
    <property type="entry name" value="aa-tRNA-synth_I_CS"/>
</dbReference>
<dbReference type="InterPro" id="IPR002300">
    <property type="entry name" value="aa-tRNA-synth_Ia"/>
</dbReference>
<dbReference type="InterPro" id="IPR002302">
    <property type="entry name" value="Leu-tRNA-ligase"/>
</dbReference>
<dbReference type="InterPro" id="IPR025709">
    <property type="entry name" value="Leu_tRNA-synth_edit"/>
</dbReference>
<dbReference type="InterPro" id="IPR013155">
    <property type="entry name" value="M/V/L/I-tRNA-synth_anticd-bd"/>
</dbReference>
<dbReference type="InterPro" id="IPR015413">
    <property type="entry name" value="Methionyl/Leucyl_tRNA_Synth"/>
</dbReference>
<dbReference type="InterPro" id="IPR014729">
    <property type="entry name" value="Rossmann-like_a/b/a_fold"/>
</dbReference>
<dbReference type="InterPro" id="IPR009080">
    <property type="entry name" value="tRNAsynth_Ia_anticodon-bd"/>
</dbReference>
<dbReference type="InterPro" id="IPR009008">
    <property type="entry name" value="Val/Leu/Ile-tRNA-synth_edit"/>
</dbReference>
<dbReference type="NCBIfam" id="TIGR00396">
    <property type="entry name" value="leuS_bact"/>
    <property type="match status" value="1"/>
</dbReference>
<dbReference type="PANTHER" id="PTHR43740:SF2">
    <property type="entry name" value="LEUCINE--TRNA LIGASE, MITOCHONDRIAL"/>
    <property type="match status" value="1"/>
</dbReference>
<dbReference type="PANTHER" id="PTHR43740">
    <property type="entry name" value="LEUCYL-TRNA SYNTHETASE"/>
    <property type="match status" value="1"/>
</dbReference>
<dbReference type="Pfam" id="PF08264">
    <property type="entry name" value="Anticodon_1"/>
    <property type="match status" value="1"/>
</dbReference>
<dbReference type="Pfam" id="PF00133">
    <property type="entry name" value="tRNA-synt_1"/>
    <property type="match status" value="1"/>
</dbReference>
<dbReference type="Pfam" id="PF13603">
    <property type="entry name" value="tRNA-synt_1_2"/>
    <property type="match status" value="1"/>
</dbReference>
<dbReference type="Pfam" id="PF09334">
    <property type="entry name" value="tRNA-synt_1g"/>
    <property type="match status" value="1"/>
</dbReference>
<dbReference type="PRINTS" id="PR00985">
    <property type="entry name" value="TRNASYNTHLEU"/>
</dbReference>
<dbReference type="SUPFAM" id="SSF47323">
    <property type="entry name" value="Anticodon-binding domain of a subclass of class I aminoacyl-tRNA synthetases"/>
    <property type="match status" value="1"/>
</dbReference>
<dbReference type="SUPFAM" id="SSF52374">
    <property type="entry name" value="Nucleotidylyl transferase"/>
    <property type="match status" value="1"/>
</dbReference>
<dbReference type="SUPFAM" id="SSF50677">
    <property type="entry name" value="ValRS/IleRS/LeuRS editing domain"/>
    <property type="match status" value="1"/>
</dbReference>
<dbReference type="PROSITE" id="PS00178">
    <property type="entry name" value="AA_TRNA_LIGASE_I"/>
    <property type="match status" value="1"/>
</dbReference>
<keyword id="KW-0030">Aminoacyl-tRNA synthetase</keyword>
<keyword id="KW-0067">ATP-binding</keyword>
<keyword id="KW-0963">Cytoplasm</keyword>
<keyword id="KW-0436">Ligase</keyword>
<keyword id="KW-0547">Nucleotide-binding</keyword>
<keyword id="KW-0648">Protein biosynthesis</keyword>
<name>SYL_ACIB5</name>
<organism>
    <name type="scientific">Acinetobacter baumannii (strain AB0057)</name>
    <dbReference type="NCBI Taxonomy" id="480119"/>
    <lineage>
        <taxon>Bacteria</taxon>
        <taxon>Pseudomonadati</taxon>
        <taxon>Pseudomonadota</taxon>
        <taxon>Gammaproteobacteria</taxon>
        <taxon>Moraxellales</taxon>
        <taxon>Moraxellaceae</taxon>
        <taxon>Acinetobacter</taxon>
        <taxon>Acinetobacter calcoaceticus/baumannii complex</taxon>
    </lineage>
</organism>
<sequence>MTISHIDPEYQANTIEPSVQQDWENRKVFKVADTVEGKHRYILSMFPYPSGKLHMGHVRNYTIGDVISRFYRLKGETVLQPMGWDAFGLPAENAAIAHKVAPAKWTFENIAYMRDQLKKLGLSVDWDREFATCTPEYYHWEQWLFVQLYKKGLIYRKLSTVNWDPVDQTVLANEQVENGRGWRSGALVEKRDIPMYYFRITDYAQELLDDLDTLQDGWPQQVLTMQRNWIGRSTGMEITFPSANTEIYADGLTVYTTRADTLMGVTYVAVAAEHPLALKAAENNPELAAFIEECRMGSVAEADLATAEKKGMATGLFVKHPVTGEELPVWIANYVLMSYGSGAVMAVPAHDERDFEFANKFNLPIKQVIDAKGADDADYSATEWQEWYGSKEGKLVNSGEFDGLEFQAAFDAFLAKLEPQGLANSKVQFRLRDWGVSRQRYWGCPIPMINCDTCGQVTVPEDQLPVVLPTDVVPDGSGNPLNKMPEFYETKCPCCGGDARRETDTLDTFVESSWYYARYASPDFTGGMVKPEAAKNWLPVNQYIGGVEHAILHLLYARFFHKLMRDEGVVQGNEPFTNLLTQGMVLADTFYREAENGKKTWFNPADIELERDEKGRIISAKYSGDGQEVIIGGQEKMSKSKNNGIDPQAIIDQYGADTARVFMMFAAPPDQSLEWSDAGVEGANRFLKRVWRLVASFLEKGNSATAIDKANLSKDAQDLRRKTHETIQKVSDDIERRHAFNTAIAALMELLNASNKFEAKDDNDVAVEREAITTLLTLLAPFAPHLSQTLLAQFGTDLTEATFPEVDASALTRNTQTIVVQVNGKLRGKLEVSVDISKDELLAQAKALPEVQQFLTGPTKKEIVVPNKLVNLVV</sequence>
<reference key="1">
    <citation type="journal article" date="2008" name="J. Bacteriol.">
        <title>Comparative genome sequence analysis of multidrug-resistant Acinetobacter baumannii.</title>
        <authorList>
            <person name="Adams M.D."/>
            <person name="Goglin K."/>
            <person name="Molyneaux N."/>
            <person name="Hujer K.M."/>
            <person name="Lavender H."/>
            <person name="Jamison J.J."/>
            <person name="MacDonald I.J."/>
            <person name="Martin K.M."/>
            <person name="Russo T."/>
            <person name="Campagnari A.A."/>
            <person name="Hujer A.M."/>
            <person name="Bonomo R.A."/>
            <person name="Gill S.R."/>
        </authorList>
    </citation>
    <scope>NUCLEOTIDE SEQUENCE [LARGE SCALE GENOMIC DNA]</scope>
    <source>
        <strain>AB0057</strain>
    </source>
</reference>